<accession>Q4VBV9</accession>
<accession>Q6TGW8</accession>
<evidence type="ECO:0000250" key="1">
    <source>
        <dbReference type="UniProtKB" id="Q9NQR4"/>
    </source>
</evidence>
<evidence type="ECO:0000255" key="2">
    <source>
        <dbReference type="PROSITE-ProRule" id="PRU00054"/>
    </source>
</evidence>
<evidence type="ECO:0000305" key="3"/>
<dbReference type="EC" id="3.5.1.3" evidence="1"/>
<dbReference type="EMBL" id="AY398388">
    <property type="protein sequence ID" value="AAQ97821.1"/>
    <property type="molecule type" value="mRNA"/>
</dbReference>
<dbReference type="EMBL" id="BC094964">
    <property type="protein sequence ID" value="AAH94964.1"/>
    <property type="molecule type" value="mRNA"/>
</dbReference>
<dbReference type="SMR" id="Q4VBV9"/>
<dbReference type="FunCoup" id="Q4VBV9">
    <property type="interactions" value="1874"/>
</dbReference>
<dbReference type="STRING" id="7955.ENSDARP00000121828"/>
<dbReference type="PaxDb" id="7955-ENSDARP00000121828"/>
<dbReference type="PeptideAtlas" id="Q4VBV9"/>
<dbReference type="AGR" id="ZFIN:ZDB-GENE-050522-65"/>
<dbReference type="ZFIN" id="ZDB-GENE-050522-65">
    <property type="gene designation" value="nit2"/>
</dbReference>
<dbReference type="eggNOG" id="KOG0806">
    <property type="taxonomic scope" value="Eukaryota"/>
</dbReference>
<dbReference type="InParanoid" id="Q4VBV9"/>
<dbReference type="PhylomeDB" id="Q4VBV9"/>
<dbReference type="Reactome" id="R-DRE-6798695">
    <property type="pathway name" value="Neutrophil degranulation"/>
</dbReference>
<dbReference type="PRO" id="PR:Q4VBV9"/>
<dbReference type="Proteomes" id="UP000000437">
    <property type="component" value="Unplaced"/>
</dbReference>
<dbReference type="GO" id="GO:0005737">
    <property type="term" value="C:cytoplasm"/>
    <property type="evidence" value="ECO:0007669"/>
    <property type="project" value="UniProtKB-SubCell"/>
</dbReference>
<dbReference type="GO" id="GO:0106008">
    <property type="term" value="F:2-oxoglutaramate amidase activity"/>
    <property type="evidence" value="ECO:0007669"/>
    <property type="project" value="RHEA"/>
</dbReference>
<dbReference type="GO" id="GO:0050152">
    <property type="term" value="F:omega-amidase activity"/>
    <property type="evidence" value="ECO:0000318"/>
    <property type="project" value="GO_Central"/>
</dbReference>
<dbReference type="GO" id="GO:0006528">
    <property type="term" value="P:asparagine metabolic process"/>
    <property type="evidence" value="ECO:0000318"/>
    <property type="project" value="GO_Central"/>
</dbReference>
<dbReference type="GO" id="GO:0006541">
    <property type="term" value="P:glutamine metabolic process"/>
    <property type="evidence" value="ECO:0000318"/>
    <property type="project" value="GO_Central"/>
</dbReference>
<dbReference type="GO" id="GO:0006107">
    <property type="term" value="P:oxaloacetate metabolic process"/>
    <property type="evidence" value="ECO:0000318"/>
    <property type="project" value="GO_Central"/>
</dbReference>
<dbReference type="CDD" id="cd07572">
    <property type="entry name" value="nit"/>
    <property type="match status" value="1"/>
</dbReference>
<dbReference type="FunFam" id="3.60.110.10:FF:000002">
    <property type="entry name" value="Nitrilase family member 2"/>
    <property type="match status" value="1"/>
</dbReference>
<dbReference type="Gene3D" id="3.60.110.10">
    <property type="entry name" value="Carbon-nitrogen hydrolase"/>
    <property type="match status" value="1"/>
</dbReference>
<dbReference type="InterPro" id="IPR003010">
    <property type="entry name" value="C-N_Hydrolase"/>
</dbReference>
<dbReference type="InterPro" id="IPR036526">
    <property type="entry name" value="C-N_Hydrolase_sf"/>
</dbReference>
<dbReference type="InterPro" id="IPR045254">
    <property type="entry name" value="Nit1/2_C-N_Hydrolase"/>
</dbReference>
<dbReference type="PANTHER" id="PTHR23088">
    <property type="entry name" value="NITRILASE-RELATED"/>
    <property type="match status" value="1"/>
</dbReference>
<dbReference type="PANTHER" id="PTHR23088:SF30">
    <property type="entry name" value="OMEGA-AMIDASE NIT2"/>
    <property type="match status" value="1"/>
</dbReference>
<dbReference type="Pfam" id="PF00795">
    <property type="entry name" value="CN_hydrolase"/>
    <property type="match status" value="1"/>
</dbReference>
<dbReference type="SUPFAM" id="SSF56317">
    <property type="entry name" value="Carbon-nitrogen hydrolase"/>
    <property type="match status" value="1"/>
</dbReference>
<dbReference type="PROSITE" id="PS50263">
    <property type="entry name" value="CN_HYDROLASE"/>
    <property type="match status" value="1"/>
</dbReference>
<protein>
    <recommendedName>
        <fullName>Omega-amidase NIT2</fullName>
        <ecNumber evidence="1">3.5.1.3</ecNumber>
    </recommendedName>
    <alternativeName>
        <fullName>Nitrilase homolog 2</fullName>
    </alternativeName>
</protein>
<organism>
    <name type="scientific">Danio rerio</name>
    <name type="common">Zebrafish</name>
    <name type="synonym">Brachydanio rerio</name>
    <dbReference type="NCBI Taxonomy" id="7955"/>
    <lineage>
        <taxon>Eukaryota</taxon>
        <taxon>Metazoa</taxon>
        <taxon>Chordata</taxon>
        <taxon>Craniata</taxon>
        <taxon>Vertebrata</taxon>
        <taxon>Euteleostomi</taxon>
        <taxon>Actinopterygii</taxon>
        <taxon>Neopterygii</taxon>
        <taxon>Teleostei</taxon>
        <taxon>Ostariophysi</taxon>
        <taxon>Cypriniformes</taxon>
        <taxon>Danionidae</taxon>
        <taxon>Danioninae</taxon>
        <taxon>Danio</taxon>
    </lineage>
</organism>
<keyword id="KW-0963">Cytoplasm</keyword>
<keyword id="KW-0378">Hydrolase</keyword>
<keyword id="KW-1185">Reference proteome</keyword>
<feature type="chain" id="PRO_0000320257" description="Omega-amidase NIT2">
    <location>
        <begin position="1"/>
        <end position="277"/>
    </location>
</feature>
<feature type="domain" description="CN hydrolase" evidence="2">
    <location>
        <begin position="4"/>
        <end position="248"/>
    </location>
</feature>
<feature type="active site" description="Proton acceptor" evidence="2">
    <location>
        <position position="43"/>
    </location>
</feature>
<feature type="active site" description="Proton donor" evidence="2">
    <location>
        <position position="112"/>
    </location>
</feature>
<feature type="active site" description="Nucleophile" evidence="2">
    <location>
        <position position="153"/>
    </location>
</feature>
<feature type="sequence conflict" description="In Ref. 1; AAQ97821." evidence="3" ref="1">
    <original>K</original>
    <variation>T</variation>
    <location>
        <position position="29"/>
    </location>
</feature>
<sequence>MSKFRLAVVQLHVSKIKADNLGRAQTLVKEAAGQGAKVVVLPECFNSPYGTGFFKEYAEKIPGESTQVLSETAKKCGIYLVGGSIPEEDGGKLYNTCSVFGPDGTLLVTHRKIHLFDIDVPGKIRFQESETLSPGKSLSMFETPYCKVGVGICYDIRFAELAQIYAKKGCQLLVYPGAFNMTTGPAHWELLQRGRAVDNQVYVATASPARDETASYVAWGHSSVINPWGEVISKAGSEESVVYADIDLQYLADVRQQIPITKQRRNDLYSVNSVQEG</sequence>
<gene>
    <name type="primary">nit2</name>
    <name type="ORF">zgc:109720</name>
</gene>
<proteinExistence type="evidence at transcript level"/>
<reference key="1">
    <citation type="journal article" date="2004" name="Proc. Natl. Acad. Sci. U.S.A.">
        <title>Hematopoietic gene expression profile in zebrafish kidney marrow.</title>
        <authorList>
            <person name="Song H.-D."/>
            <person name="Sun X.-J."/>
            <person name="Deng M."/>
            <person name="Zhang G.-W."/>
            <person name="Zhou Y."/>
            <person name="Wu X.-Y."/>
            <person name="Sheng Y."/>
            <person name="Chen Y."/>
            <person name="Ruan Z."/>
            <person name="Jiang C.-L."/>
            <person name="Fan H.-Y."/>
            <person name="Zon L.I."/>
            <person name="Kanki J.P."/>
            <person name="Liu T.X."/>
            <person name="Look A.T."/>
            <person name="Chen Z."/>
        </authorList>
    </citation>
    <scope>NUCLEOTIDE SEQUENCE [LARGE SCALE MRNA]</scope>
    <source>
        <tissue>Kidney marrow</tissue>
    </source>
</reference>
<reference key="2">
    <citation type="submission" date="2005-05" db="EMBL/GenBank/DDBJ databases">
        <authorList>
            <consortium name="NIH - Zebrafish Gene Collection (ZGC) project"/>
        </authorList>
    </citation>
    <scope>NUCLEOTIDE SEQUENCE [LARGE SCALE MRNA]</scope>
    <source>
        <tissue>Heart</tissue>
    </source>
</reference>
<name>NIT2_DANRE</name>
<comment type="function">
    <text evidence="1">Has omega-amidase activity. The role of omega-amidase is to remove potentially toxic intermediates by converting 2-oxoglutaramate and 2-oxosuccinamate to biologically useful 2-oxoglutarate and oxaloacetate, respectively.</text>
</comment>
<comment type="catalytic activity">
    <reaction evidence="1">
        <text>2-oxoglutaramate + H2O = 2-oxoglutarate + NH4(+)</text>
        <dbReference type="Rhea" id="RHEA:32963"/>
        <dbReference type="ChEBI" id="CHEBI:15377"/>
        <dbReference type="ChEBI" id="CHEBI:16769"/>
        <dbReference type="ChEBI" id="CHEBI:16810"/>
        <dbReference type="ChEBI" id="CHEBI:28938"/>
        <dbReference type="EC" id="3.5.1.3"/>
    </reaction>
    <physiologicalReaction direction="left-to-right" evidence="1">
        <dbReference type="Rhea" id="RHEA:32964"/>
    </physiologicalReaction>
</comment>
<comment type="catalytic activity">
    <reaction evidence="1">
        <text>2-oxosuccinamate + H2O = oxaloacetate + NH4(+)</text>
        <dbReference type="Rhea" id="RHEA:59412"/>
        <dbReference type="ChEBI" id="CHEBI:15377"/>
        <dbReference type="ChEBI" id="CHEBI:16452"/>
        <dbReference type="ChEBI" id="CHEBI:28938"/>
        <dbReference type="ChEBI" id="CHEBI:57735"/>
        <dbReference type="EC" id="3.5.1.3"/>
    </reaction>
    <physiologicalReaction direction="left-to-right" evidence="1">
        <dbReference type="Rhea" id="RHEA:59413"/>
    </physiologicalReaction>
</comment>
<comment type="subunit">
    <text evidence="1">Homodimer.</text>
</comment>
<comment type="subcellular location">
    <subcellularLocation>
        <location evidence="1">Cytoplasm</location>
    </subcellularLocation>
</comment>
<comment type="similarity">
    <text evidence="3">Belongs to the carbon-nitrogen hydrolase superfamily. NIT1/NIT2 family.</text>
</comment>